<dbReference type="EC" id="2.4.1.-"/>
<dbReference type="EMBL" id="AF154111">
    <property type="protein sequence ID" value="AAD41092.1"/>
    <property type="molecule type" value="mRNA"/>
</dbReference>
<dbReference type="EMBL" id="AC005313">
    <property type="protein sequence ID" value="AAC34480.1"/>
    <property type="molecule type" value="Genomic_DNA"/>
</dbReference>
<dbReference type="EMBL" id="CP002685">
    <property type="protein sequence ID" value="AEC05676.1"/>
    <property type="molecule type" value="Genomic_DNA"/>
</dbReference>
<dbReference type="EMBL" id="AY139993">
    <property type="protein sequence ID" value="AAM98135.1"/>
    <property type="molecule type" value="mRNA"/>
</dbReference>
<dbReference type="EMBL" id="BT002477">
    <property type="protein sequence ID" value="AAO00837.1"/>
    <property type="molecule type" value="mRNA"/>
</dbReference>
<dbReference type="EMBL" id="BT003401">
    <property type="protein sequence ID" value="AAO30064.1"/>
    <property type="molecule type" value="mRNA"/>
</dbReference>
<dbReference type="PIR" id="T02704">
    <property type="entry name" value="T02704"/>
</dbReference>
<dbReference type="RefSeq" id="NP_178421.1">
    <property type="nucleotide sequence ID" value="NM_126373.3"/>
</dbReference>
<dbReference type="PDB" id="5KOE">
    <property type="method" value="X-ray"/>
    <property type="resolution" value="1.79 A"/>
    <property type="chains" value="A/B/C/D=84-558"/>
</dbReference>
<dbReference type="PDB" id="5KOP">
    <property type="method" value="X-ray"/>
    <property type="resolution" value="2.10 A"/>
    <property type="chains" value="A/B/C/D=69-558"/>
</dbReference>
<dbReference type="PDB" id="5KOR">
    <property type="method" value="X-ray"/>
    <property type="resolution" value="2.20 A"/>
    <property type="chains" value="A/B/C/D=69-558"/>
</dbReference>
<dbReference type="PDB" id="5KWK">
    <property type="method" value="X-ray"/>
    <property type="resolution" value="1.90 A"/>
    <property type="chains" value="A/B=84-558"/>
</dbReference>
<dbReference type="PDB" id="5KX6">
    <property type="method" value="X-ray"/>
    <property type="resolution" value="2.20 A"/>
    <property type="chains" value="A/B=84-558"/>
</dbReference>
<dbReference type="PDBsum" id="5KOE"/>
<dbReference type="PDBsum" id="5KOP"/>
<dbReference type="PDBsum" id="5KOR"/>
<dbReference type="PDBsum" id="5KWK"/>
<dbReference type="PDBsum" id="5KX6"/>
<dbReference type="SMR" id="Q9SWH5"/>
<dbReference type="BioGRID" id="253">
    <property type="interactions" value="7"/>
</dbReference>
<dbReference type="FunCoup" id="Q9SWH5">
    <property type="interactions" value="1438"/>
</dbReference>
<dbReference type="IntAct" id="Q9SWH5">
    <property type="interactions" value="1"/>
</dbReference>
<dbReference type="STRING" id="3702.Q9SWH5"/>
<dbReference type="CAZy" id="GT37">
    <property type="family name" value="Glycosyltransferase Family 37"/>
</dbReference>
<dbReference type="GlyCosmos" id="Q9SWH5">
    <property type="glycosylation" value="2 sites, No reported glycans"/>
</dbReference>
<dbReference type="GlyGen" id="Q9SWH5">
    <property type="glycosylation" value="2 sites"/>
</dbReference>
<dbReference type="PaxDb" id="3702-AT2G03220.1"/>
<dbReference type="ProteomicsDB" id="247381"/>
<dbReference type="EnsemblPlants" id="AT2G03220.1">
    <property type="protein sequence ID" value="AT2G03220.1"/>
    <property type="gene ID" value="AT2G03220"/>
</dbReference>
<dbReference type="GeneID" id="814851"/>
<dbReference type="Gramene" id="AT2G03220.1">
    <property type="protein sequence ID" value="AT2G03220.1"/>
    <property type="gene ID" value="AT2G03220"/>
</dbReference>
<dbReference type="KEGG" id="ath:AT2G03220"/>
<dbReference type="Araport" id="AT2G03220"/>
<dbReference type="TAIR" id="AT2G03220">
    <property type="gene designation" value="FT1"/>
</dbReference>
<dbReference type="eggNOG" id="ENOG502QTTA">
    <property type="taxonomic scope" value="Eukaryota"/>
</dbReference>
<dbReference type="HOGENOM" id="CLU_001992_2_1_1"/>
<dbReference type="InParanoid" id="Q9SWH5"/>
<dbReference type="OMA" id="VSHCEDM"/>
<dbReference type="PhylomeDB" id="Q9SWH5"/>
<dbReference type="BioCyc" id="ARA:AT2G03220-MONOMER"/>
<dbReference type="BioCyc" id="MetaCyc:AT2G03220-MONOMER"/>
<dbReference type="BRENDA" id="2.4.1.344">
    <property type="organism ID" value="399"/>
</dbReference>
<dbReference type="BRENDA" id="2.4.1.69">
    <property type="organism ID" value="399"/>
</dbReference>
<dbReference type="PRO" id="PR:Q9SWH5"/>
<dbReference type="Proteomes" id="UP000006548">
    <property type="component" value="Chromosome 2"/>
</dbReference>
<dbReference type="ExpressionAtlas" id="Q9SWH5">
    <property type="expression patterns" value="baseline and differential"/>
</dbReference>
<dbReference type="GO" id="GO:0005794">
    <property type="term" value="C:Golgi apparatus"/>
    <property type="evidence" value="ECO:0007005"/>
    <property type="project" value="TAIR"/>
</dbReference>
<dbReference type="GO" id="GO:0032580">
    <property type="term" value="C:Golgi cisterna membrane"/>
    <property type="evidence" value="ECO:0007669"/>
    <property type="project" value="UniProtKB-SubCell"/>
</dbReference>
<dbReference type="GO" id="GO:0005797">
    <property type="term" value="C:Golgi medial cisterna"/>
    <property type="evidence" value="ECO:0007005"/>
    <property type="project" value="TAIR"/>
</dbReference>
<dbReference type="GO" id="GO:0000139">
    <property type="term" value="C:Golgi membrane"/>
    <property type="evidence" value="ECO:0007669"/>
    <property type="project" value="UniProtKB-SubCell"/>
</dbReference>
<dbReference type="GO" id="GO:0008417">
    <property type="term" value="F:fucosyltransferase activity"/>
    <property type="evidence" value="ECO:0000250"/>
    <property type="project" value="TAIR"/>
</dbReference>
<dbReference type="GO" id="GO:0008107">
    <property type="term" value="F:galactoside 2-alpha-L-fucosyltransferase activity"/>
    <property type="evidence" value="ECO:0007669"/>
    <property type="project" value="InterPro"/>
</dbReference>
<dbReference type="GO" id="GO:0042803">
    <property type="term" value="F:protein homodimerization activity"/>
    <property type="evidence" value="ECO:0000353"/>
    <property type="project" value="UniProtKB"/>
</dbReference>
<dbReference type="GO" id="GO:0042546">
    <property type="term" value="P:cell wall biogenesis"/>
    <property type="evidence" value="ECO:0007669"/>
    <property type="project" value="InterPro"/>
</dbReference>
<dbReference type="GO" id="GO:0071555">
    <property type="term" value="P:cell wall organization"/>
    <property type="evidence" value="ECO:0007669"/>
    <property type="project" value="UniProtKB-KW"/>
</dbReference>
<dbReference type="GO" id="GO:0009969">
    <property type="term" value="P:xyloglucan biosynthetic process"/>
    <property type="evidence" value="ECO:0000314"/>
    <property type="project" value="TAIR"/>
</dbReference>
<dbReference type="FunFam" id="3.40.50.11340:FF:000005">
    <property type="entry name" value="Galactoside 2-alpha-L-fucosyltransferase"/>
    <property type="match status" value="1"/>
</dbReference>
<dbReference type="FunFam" id="3.40.50.11350:FF:000009">
    <property type="entry name" value="Galactoside 2-alpha-L-fucosyltransferase"/>
    <property type="match status" value="1"/>
</dbReference>
<dbReference type="Gene3D" id="3.40.50.11340">
    <property type="match status" value="1"/>
</dbReference>
<dbReference type="Gene3D" id="3.40.50.11350">
    <property type="match status" value="1"/>
</dbReference>
<dbReference type="InterPro" id="IPR004938">
    <property type="entry name" value="XG_FTase"/>
</dbReference>
<dbReference type="PANTHER" id="PTHR31889">
    <property type="entry name" value="FUCOSYLTRANSFERASE 2-RELATED"/>
    <property type="match status" value="1"/>
</dbReference>
<dbReference type="PANTHER" id="PTHR31889:SF74">
    <property type="entry name" value="GALACTOSIDE 2-ALPHA-L-FUCOSYLTRANSFERASE"/>
    <property type="match status" value="1"/>
</dbReference>
<dbReference type="Pfam" id="PF03254">
    <property type="entry name" value="XG_FTase"/>
    <property type="match status" value="1"/>
</dbReference>
<reference key="1">
    <citation type="journal article" date="1999" name="Science">
        <title>Xyloglucan fucosyltransferase, an enzyme involved in plant cell wall biosynthesis.</title>
        <authorList>
            <person name="Perrin R.M."/>
            <person name="DeRocher A.E."/>
            <person name="Bar-Peled M."/>
            <person name="Zeng W."/>
            <person name="Norambuena L."/>
            <person name="Orellana A."/>
            <person name="Raikhel N.V."/>
            <person name="Keegstra K."/>
        </authorList>
    </citation>
    <scope>NUCLEOTIDE SEQUENCE [MRNA]</scope>
    <scope>FUNCTION</scope>
    <source>
        <strain>cv. Columbia</strain>
    </source>
</reference>
<reference key="2">
    <citation type="journal article" date="1999" name="Nature">
        <title>Sequence and analysis of chromosome 2 of the plant Arabidopsis thaliana.</title>
        <authorList>
            <person name="Lin X."/>
            <person name="Kaul S."/>
            <person name="Rounsley S.D."/>
            <person name="Shea T.P."/>
            <person name="Benito M.-I."/>
            <person name="Town C.D."/>
            <person name="Fujii C.Y."/>
            <person name="Mason T.M."/>
            <person name="Bowman C.L."/>
            <person name="Barnstead M.E."/>
            <person name="Feldblyum T.V."/>
            <person name="Buell C.R."/>
            <person name="Ketchum K.A."/>
            <person name="Lee J.J."/>
            <person name="Ronning C.M."/>
            <person name="Koo H.L."/>
            <person name="Moffat K.S."/>
            <person name="Cronin L.A."/>
            <person name="Shen M."/>
            <person name="Pai G."/>
            <person name="Van Aken S."/>
            <person name="Umayam L."/>
            <person name="Tallon L.J."/>
            <person name="Gill J.E."/>
            <person name="Adams M.D."/>
            <person name="Carrera A.J."/>
            <person name="Creasy T.H."/>
            <person name="Goodman H.M."/>
            <person name="Somerville C.R."/>
            <person name="Copenhaver G.P."/>
            <person name="Preuss D."/>
            <person name="Nierman W.C."/>
            <person name="White O."/>
            <person name="Eisen J.A."/>
            <person name="Salzberg S.L."/>
            <person name="Fraser C.M."/>
            <person name="Venter J.C."/>
        </authorList>
    </citation>
    <scope>NUCLEOTIDE SEQUENCE [LARGE SCALE GENOMIC DNA]</scope>
    <source>
        <strain>cv. Columbia</strain>
    </source>
</reference>
<reference key="3">
    <citation type="journal article" date="2017" name="Plant J.">
        <title>Araport11: a complete reannotation of the Arabidopsis thaliana reference genome.</title>
        <authorList>
            <person name="Cheng C.Y."/>
            <person name="Krishnakumar V."/>
            <person name="Chan A.P."/>
            <person name="Thibaud-Nissen F."/>
            <person name="Schobel S."/>
            <person name="Town C.D."/>
        </authorList>
    </citation>
    <scope>GENOME REANNOTATION</scope>
    <source>
        <strain>cv. Columbia</strain>
    </source>
</reference>
<reference key="4">
    <citation type="journal article" date="2003" name="Science">
        <title>Empirical analysis of transcriptional activity in the Arabidopsis genome.</title>
        <authorList>
            <person name="Yamada K."/>
            <person name="Lim J."/>
            <person name="Dale J.M."/>
            <person name="Chen H."/>
            <person name="Shinn P."/>
            <person name="Palm C.J."/>
            <person name="Southwick A.M."/>
            <person name="Wu H.C."/>
            <person name="Kim C.J."/>
            <person name="Nguyen M."/>
            <person name="Pham P.K."/>
            <person name="Cheuk R.F."/>
            <person name="Karlin-Newmann G."/>
            <person name="Liu S.X."/>
            <person name="Lam B."/>
            <person name="Sakano H."/>
            <person name="Wu T."/>
            <person name="Yu G."/>
            <person name="Miranda M."/>
            <person name="Quach H.L."/>
            <person name="Tripp M."/>
            <person name="Chang C.H."/>
            <person name="Lee J.M."/>
            <person name="Toriumi M.J."/>
            <person name="Chan M.M."/>
            <person name="Tang C.C."/>
            <person name="Onodera C.S."/>
            <person name="Deng J.M."/>
            <person name="Akiyama K."/>
            <person name="Ansari Y."/>
            <person name="Arakawa T."/>
            <person name="Banh J."/>
            <person name="Banno F."/>
            <person name="Bowser L."/>
            <person name="Brooks S.Y."/>
            <person name="Carninci P."/>
            <person name="Chao Q."/>
            <person name="Choy N."/>
            <person name="Enju A."/>
            <person name="Goldsmith A.D."/>
            <person name="Gurjal M."/>
            <person name="Hansen N.F."/>
            <person name="Hayashizaki Y."/>
            <person name="Johnson-Hopson C."/>
            <person name="Hsuan V.W."/>
            <person name="Iida K."/>
            <person name="Karnes M."/>
            <person name="Khan S."/>
            <person name="Koesema E."/>
            <person name="Ishida J."/>
            <person name="Jiang P.X."/>
            <person name="Jones T."/>
            <person name="Kawai J."/>
            <person name="Kamiya A."/>
            <person name="Meyers C."/>
            <person name="Nakajima M."/>
            <person name="Narusaka M."/>
            <person name="Seki M."/>
            <person name="Sakurai T."/>
            <person name="Satou M."/>
            <person name="Tamse R."/>
            <person name="Vaysberg M."/>
            <person name="Wallender E.K."/>
            <person name="Wong C."/>
            <person name="Yamamura Y."/>
            <person name="Yuan S."/>
            <person name="Shinozaki K."/>
            <person name="Davis R.W."/>
            <person name="Theologis A."/>
            <person name="Ecker J.R."/>
        </authorList>
    </citation>
    <scope>NUCLEOTIDE SEQUENCE [LARGE SCALE MRNA]</scope>
    <source>
        <strain>cv. Columbia</strain>
    </source>
</reference>
<reference key="5">
    <citation type="journal article" date="2001" name="Plant Physiol.">
        <title>Characterization of a family of Arabidopsis genes related to xyloglucan fucosyltransferase1.</title>
        <authorList>
            <person name="Sarria R."/>
            <person name="Wagner T.A."/>
            <person name="O'Neill M.A."/>
            <person name="Faik A."/>
            <person name="Wilkerson C.G."/>
            <person name="Keegstra K."/>
            <person name="Raikhel N.V."/>
        </authorList>
    </citation>
    <scope>FUNCTION</scope>
    <scope>TISSUE SPECIFICITY</scope>
</reference>
<reference key="6">
    <citation type="journal article" date="2002" name="Proc. Natl. Acad. Sci. U.S.A.">
        <title>The mur2 mutant of Arabidopsis thaliana lacks fucosylated xyloglucan because of a lesion in fucosyltransferase AtFUT1.</title>
        <authorList>
            <person name="Vanzin G.F."/>
            <person name="Madson M."/>
            <person name="Carpita N.C."/>
            <person name="Raikhel N.V."/>
            <person name="Keegstra K."/>
            <person name="Reiter W.D."/>
        </authorList>
    </citation>
    <scope>FUNCTION</scope>
    <scope>MUTAGENESIS OF ASP-550</scope>
</reference>
<reference key="7">
    <citation type="journal article" date="2004" name="Plant Physiol.">
        <title>The galactose residues of xyloglucan are essential to maintain mechanical strength of the primary cell walls in Arabidopsis during growth.</title>
        <authorList>
            <person name="Pena M.J."/>
            <person name="Ryden P."/>
            <person name="Madson M."/>
            <person name="Smith A.C."/>
            <person name="Carpita N.C."/>
        </authorList>
    </citation>
    <scope>FUNCTION</scope>
</reference>
<reference key="8">
    <citation type="journal article" date="2010" name="Plant J.">
        <title>Subcompartment localization of the side chain xyloglucan-synthesizing enzymes within Golgi stacks of tobacco suspension-cultured cells.</title>
        <authorList>
            <person name="Chevalier L."/>
            <person name="Bernard S."/>
            <person name="Ramdani Y."/>
            <person name="Lamour R."/>
            <person name="Bardor M."/>
            <person name="Lerouge P."/>
            <person name="Follet-Gueye M.L."/>
            <person name="Driouich A."/>
        </authorList>
    </citation>
    <scope>SUBCELLULAR LOCATION</scope>
</reference>
<reference key="9">
    <citation type="journal article" date="2015" name="Plant Cell Physiol.">
        <title>Protein-protein interactions among xyloglucan-synthesizing enzymes and formation of Golgi-localized multiprotein complexes.</title>
        <authorList>
            <person name="Chou Y.H."/>
            <person name="Pogorelko G."/>
            <person name="Young Z.T."/>
            <person name="Zabotina O.A."/>
        </authorList>
    </citation>
    <scope>FUNCTION</scope>
    <scope>SUBUNIT</scope>
    <scope>INTERACTION WITH MUR3; XLT2; XXT2 AND XXT5</scope>
    <scope>SUBCELLULAR LOCATION</scope>
</reference>
<organism>
    <name type="scientific">Arabidopsis thaliana</name>
    <name type="common">Mouse-ear cress</name>
    <dbReference type="NCBI Taxonomy" id="3702"/>
    <lineage>
        <taxon>Eukaryota</taxon>
        <taxon>Viridiplantae</taxon>
        <taxon>Streptophyta</taxon>
        <taxon>Embryophyta</taxon>
        <taxon>Tracheophyta</taxon>
        <taxon>Spermatophyta</taxon>
        <taxon>Magnoliopsida</taxon>
        <taxon>eudicotyledons</taxon>
        <taxon>Gunneridae</taxon>
        <taxon>Pentapetalae</taxon>
        <taxon>rosids</taxon>
        <taxon>malvids</taxon>
        <taxon>Brassicales</taxon>
        <taxon>Brassicaceae</taxon>
        <taxon>Camelineae</taxon>
        <taxon>Arabidopsis</taxon>
    </lineage>
</organism>
<sequence length="558" mass="63452">MDQNSYRRRSSPIRTTTGGSKSVNFSELLQMKYLSSGTMKLTRTFTTCLIVFSVLVAFSMIFHQHPSDSNRIMGFAEARVLDAGVFPNVTNINSDKLLGGLLASGFDEDSCLSRYQSVHYRKPSPYKPSSYLISKLRNYEKLHKRCGPGTESYKKALKQLDQEHIDGDGECKYVVWISFSGLGNRILSLASVFLYALLTDRVLLVDRGKDMDDLFCEPFLGMSWLLPLDFPMTDQFDGLNQESSRCYGYMVKNQVIDTEGTLSHLYLHLVHDYGDHDKMFFCEGDQTFIGKVPWLIVKTDNYFVPSLWLIPGFDDELNKLFPQKATVFHHLGRYLFHPTNQVWGLVTRYYEAYLSHADEKIGIQVRVFDEDPGPFQHVMDQISSCTQKEKLLPEVDTLVERSRHVNTPKHKAVLVTSLNAGYAENLKSMYWEYPTSTGEIIGVHQPSQEGYQQTEKKMHNGKALAEMYLLSLTDNLVTSAWSTFGYVAQGLGGLKPWILYRPENRTTPDPSCGRAMSMEPCFHSPPFYDCKAKTGIDTGTLVPHVRHCEDISWGLKLV</sequence>
<proteinExistence type="evidence at protein level"/>
<name>FUT1_ARATH</name>
<feature type="chain" id="PRO_0000193909" description="Galactoside 2-alpha-L-fucosyltransferase">
    <location>
        <begin position="1"/>
        <end position="558"/>
    </location>
</feature>
<feature type="topological domain" description="Cytoplasmic" evidence="1">
    <location>
        <begin position="1"/>
        <end position="43"/>
    </location>
</feature>
<feature type="transmembrane region" description="Helical; Signal-anchor for type II membrane protein" evidence="1">
    <location>
        <begin position="44"/>
        <end position="64"/>
    </location>
</feature>
<feature type="topological domain" description="Lumenal" evidence="1">
    <location>
        <begin position="65"/>
        <end position="558"/>
    </location>
</feature>
<feature type="glycosylation site" description="N-linked (GlcNAc...) asparagine" evidence="1">
    <location>
        <position position="88"/>
    </location>
</feature>
<feature type="glycosylation site" description="N-linked (GlcNAc...) asparagine" evidence="1">
    <location>
        <position position="504"/>
    </location>
</feature>
<feature type="mutagenesis site" description="In mur2; loss of activity and lack of fucosylated xylogulcan." evidence="4">
    <original>D</original>
    <variation>N</variation>
    <location>
        <position position="550"/>
    </location>
</feature>
<feature type="sequence conflict" description="In Ref. 1; AAD41092." evidence="8" ref="1">
    <original>V</original>
    <variation>F</variation>
    <location>
        <position position="270"/>
    </location>
</feature>
<feature type="turn" evidence="11">
    <location>
        <begin position="83"/>
        <end position="85"/>
    </location>
</feature>
<feature type="turn" evidence="10">
    <location>
        <begin position="96"/>
        <end position="101"/>
    </location>
</feature>
<feature type="helix" evidence="10">
    <location>
        <begin position="109"/>
        <end position="111"/>
    </location>
</feature>
<feature type="helix" evidence="10">
    <location>
        <begin position="113"/>
        <end position="116"/>
    </location>
</feature>
<feature type="helix" evidence="10">
    <location>
        <begin position="117"/>
        <end position="119"/>
    </location>
</feature>
<feature type="helix" evidence="10">
    <location>
        <begin position="130"/>
        <end position="146"/>
    </location>
</feature>
<feature type="helix" evidence="10">
    <location>
        <begin position="151"/>
        <end position="157"/>
    </location>
</feature>
<feature type="helix" evidence="10">
    <location>
        <begin position="158"/>
        <end position="161"/>
    </location>
</feature>
<feature type="strand" evidence="11">
    <location>
        <begin position="162"/>
        <end position="164"/>
    </location>
</feature>
<feature type="strand" evidence="10">
    <location>
        <begin position="173"/>
        <end position="176"/>
    </location>
</feature>
<feature type="helix" evidence="10">
    <location>
        <begin position="182"/>
        <end position="199"/>
    </location>
</feature>
<feature type="strand" evidence="10">
    <location>
        <begin position="202"/>
        <end position="205"/>
    </location>
</feature>
<feature type="turn" evidence="10">
    <location>
        <begin position="208"/>
        <end position="210"/>
    </location>
</feature>
<feature type="helix" evidence="10">
    <location>
        <begin position="211"/>
        <end position="214"/>
    </location>
</feature>
<feature type="helix" evidence="10">
    <location>
        <begin position="231"/>
        <end position="235"/>
    </location>
</feature>
<feature type="turn" evidence="10">
    <location>
        <begin position="236"/>
        <end position="238"/>
    </location>
</feature>
<feature type="helix" evidence="10">
    <location>
        <begin position="247"/>
        <end position="253"/>
    </location>
</feature>
<feature type="strand" evidence="10">
    <location>
        <begin position="264"/>
        <end position="270"/>
    </location>
</feature>
<feature type="helix" evidence="10">
    <location>
        <begin position="277"/>
        <end position="281"/>
    </location>
</feature>
<feature type="helix" evidence="10">
    <location>
        <begin position="283"/>
        <end position="290"/>
    </location>
</feature>
<feature type="strand" evidence="10">
    <location>
        <begin position="293"/>
        <end position="301"/>
    </location>
</feature>
<feature type="helix" evidence="10">
    <location>
        <begin position="304"/>
        <end position="307"/>
    </location>
</feature>
<feature type="helix" evidence="10">
    <location>
        <begin position="313"/>
        <end position="320"/>
    </location>
</feature>
<feature type="helix" evidence="12">
    <location>
        <begin position="324"/>
        <end position="326"/>
    </location>
</feature>
<feature type="helix" evidence="10">
    <location>
        <begin position="327"/>
        <end position="335"/>
    </location>
</feature>
<feature type="helix" evidence="10">
    <location>
        <begin position="340"/>
        <end position="353"/>
    </location>
</feature>
<feature type="turn" evidence="10">
    <location>
        <begin position="354"/>
        <end position="356"/>
    </location>
</feature>
<feature type="strand" evidence="10">
    <location>
        <begin position="358"/>
        <end position="364"/>
    </location>
</feature>
<feature type="strand" evidence="12">
    <location>
        <begin position="369"/>
        <end position="371"/>
    </location>
</feature>
<feature type="helix" evidence="10">
    <location>
        <begin position="376"/>
        <end position="388"/>
    </location>
</feature>
<feature type="strand" evidence="10">
    <location>
        <begin position="410"/>
        <end position="416"/>
    </location>
</feature>
<feature type="strand" evidence="13">
    <location>
        <begin position="418"/>
        <end position="420"/>
    </location>
</feature>
<feature type="helix" evidence="10">
    <location>
        <begin position="421"/>
        <end position="432"/>
    </location>
</feature>
<feature type="strand" evidence="12">
    <location>
        <begin position="435"/>
        <end position="437"/>
    </location>
</feature>
<feature type="strand" evidence="10">
    <location>
        <begin position="440"/>
        <end position="444"/>
    </location>
</feature>
<feature type="helix" evidence="10">
    <location>
        <begin position="459"/>
        <end position="471"/>
    </location>
</feature>
<feature type="strand" evidence="10">
    <location>
        <begin position="473"/>
        <end position="479"/>
    </location>
</feature>
<feature type="helix" evidence="10">
    <location>
        <begin position="483"/>
        <end position="492"/>
    </location>
</feature>
<feature type="strand" evidence="10">
    <location>
        <begin position="497"/>
        <end position="499"/>
    </location>
</feature>
<feature type="strand" evidence="10">
    <location>
        <begin position="512"/>
        <end position="514"/>
    </location>
</feature>
<feature type="strand" evidence="12">
    <location>
        <begin position="516"/>
        <end position="518"/>
    </location>
</feature>
<feature type="strand" evidence="10">
    <location>
        <begin position="522"/>
        <end position="524"/>
    </location>
</feature>
<feature type="turn" evidence="10">
    <location>
        <begin position="530"/>
        <end position="533"/>
    </location>
</feature>
<feature type="strand" evidence="10">
    <location>
        <begin position="540"/>
        <end position="542"/>
    </location>
</feature>
<feature type="strand" evidence="10">
    <location>
        <begin position="545"/>
        <end position="547"/>
    </location>
</feature>
<feature type="strand" evidence="10">
    <location>
        <begin position="549"/>
        <end position="551"/>
    </location>
</feature>
<feature type="strand" evidence="10">
    <location>
        <begin position="555"/>
        <end position="557"/>
    </location>
</feature>
<protein>
    <recommendedName>
        <fullName>Galactoside 2-alpha-L-fucosyltransferase</fullName>
        <ecNumber>2.4.1.-</ecNumber>
    </recommendedName>
    <alternativeName>
        <fullName>Xyloglucan alpha-(1,2)-fucosyltransferase</fullName>
        <shortName>AtFUT1</shortName>
    </alternativeName>
</protein>
<accession>Q9SWH5</accession>
<accession>O81052</accession>
<gene>
    <name type="primary">FUT1</name>
    <name type="synonym">FT1</name>
    <name type="synonym">MUR2</name>
    <name type="ordered locus">At2g03220</name>
    <name type="ORF">T18E12.11</name>
</gene>
<keyword id="KW-0002">3D-structure</keyword>
<keyword id="KW-0961">Cell wall biogenesis/degradation</keyword>
<keyword id="KW-0325">Glycoprotein</keyword>
<keyword id="KW-0328">Glycosyltransferase</keyword>
<keyword id="KW-0333">Golgi apparatus</keyword>
<keyword id="KW-0472">Membrane</keyword>
<keyword id="KW-1185">Reference proteome</keyword>
<keyword id="KW-0735">Signal-anchor</keyword>
<keyword id="KW-0808">Transferase</keyword>
<keyword id="KW-0812">Transmembrane</keyword>
<keyword id="KW-1133">Transmembrane helix</keyword>
<comment type="function">
    <text evidence="2 3 4 5 7">Involved in cell wall biosynthesis. Is both necessary and sufficient for the addition of the terminal fucosyl residue on xyloglucan side chains, but is not involved in the fucosylation of other cell wall components (PubMed:10373113, PubMed:11743104, PubMed:11854459, PubMed:14730072). Associates with other xyloglucan-synthesizing enzymes to form multiprotein complexes for xyloglucan synthesis in the Golgi (PubMed:25392066).</text>
</comment>
<comment type="subunit">
    <text evidence="7">Homodimer (PubMed:25392066). Interacts with MUR3, XLT2, XXT2 and XXT5 (PubMed:25392066).</text>
</comment>
<comment type="subcellular location">
    <subcellularLocation>
        <location evidence="6">Golgi apparatus</location>
        <location evidence="6">Golgi stack membrane</location>
        <topology evidence="6">Single-pass type II membrane protein</topology>
    </subcellularLocation>
    <subcellularLocation>
        <location evidence="7">Golgi apparatus membrane</location>
        <topology evidence="9">Single-pass type II membrane protein</topology>
    </subcellularLocation>
    <text evidence="6">Membrane-bound form in trans cisternae of Golgi.</text>
</comment>
<comment type="tissue specificity">
    <text evidence="3">Expressed in roots, stems, leaves, flowers, siliques and seedlings.</text>
</comment>
<comment type="similarity">
    <text evidence="8">Belongs to the glycosyltransferase 37 family.</text>
</comment>
<evidence type="ECO:0000255" key="1"/>
<evidence type="ECO:0000269" key="2">
    <source>
    </source>
</evidence>
<evidence type="ECO:0000269" key="3">
    <source>
    </source>
</evidence>
<evidence type="ECO:0000269" key="4">
    <source>
    </source>
</evidence>
<evidence type="ECO:0000269" key="5">
    <source>
    </source>
</evidence>
<evidence type="ECO:0000269" key="6">
    <source>
    </source>
</evidence>
<evidence type="ECO:0000269" key="7">
    <source>
    </source>
</evidence>
<evidence type="ECO:0000305" key="8"/>
<evidence type="ECO:0000305" key="9">
    <source>
    </source>
</evidence>
<evidence type="ECO:0007829" key="10">
    <source>
        <dbReference type="PDB" id="5KOE"/>
    </source>
</evidence>
<evidence type="ECO:0007829" key="11">
    <source>
        <dbReference type="PDB" id="5KOP"/>
    </source>
</evidence>
<evidence type="ECO:0007829" key="12">
    <source>
        <dbReference type="PDB" id="5KWK"/>
    </source>
</evidence>
<evidence type="ECO:0007829" key="13">
    <source>
        <dbReference type="PDB" id="5KX6"/>
    </source>
</evidence>